<reference key="1">
    <citation type="submission" date="2007-06" db="EMBL/GenBank/DDBJ databases">
        <title>Complete sequence of Methanococcus maripaludis C7.</title>
        <authorList>
            <consortium name="US DOE Joint Genome Institute"/>
            <person name="Copeland A."/>
            <person name="Lucas S."/>
            <person name="Lapidus A."/>
            <person name="Barry K."/>
            <person name="Glavina del Rio T."/>
            <person name="Dalin E."/>
            <person name="Tice H."/>
            <person name="Pitluck S."/>
            <person name="Clum A."/>
            <person name="Schmutz J."/>
            <person name="Larimer F."/>
            <person name="Land M."/>
            <person name="Hauser L."/>
            <person name="Kyrpides N."/>
            <person name="Anderson I."/>
            <person name="Sieprawska-Lupa M."/>
            <person name="Whitman W.B."/>
            <person name="Richardson P."/>
        </authorList>
    </citation>
    <scope>NUCLEOTIDE SEQUENCE [LARGE SCALE GENOMIC DNA]</scope>
    <source>
        <strain>C7 / ATCC BAA-1331</strain>
    </source>
</reference>
<evidence type="ECO:0000255" key="1">
    <source>
        <dbReference type="HAMAP-Rule" id="MF_01307"/>
    </source>
</evidence>
<evidence type="ECO:0000305" key="2"/>
<dbReference type="EMBL" id="CP000745">
    <property type="protein sequence ID" value="ABR65731.1"/>
    <property type="molecule type" value="Genomic_DNA"/>
</dbReference>
<dbReference type="SMR" id="A6VH05"/>
<dbReference type="STRING" id="426368.MmarC7_0664"/>
<dbReference type="KEGG" id="mmz:MmarC7_0664"/>
<dbReference type="eggNOG" id="arCOG04087">
    <property type="taxonomic scope" value="Archaea"/>
</dbReference>
<dbReference type="HOGENOM" id="CLU_065898_0_1_2"/>
<dbReference type="OrthoDB" id="38155at2157"/>
<dbReference type="GO" id="GO:0022627">
    <property type="term" value="C:cytosolic small ribosomal subunit"/>
    <property type="evidence" value="ECO:0007669"/>
    <property type="project" value="TreeGrafter"/>
</dbReference>
<dbReference type="GO" id="GO:0019843">
    <property type="term" value="F:rRNA binding"/>
    <property type="evidence" value="ECO:0007669"/>
    <property type="project" value="UniProtKB-UniRule"/>
</dbReference>
<dbReference type="GO" id="GO:0003735">
    <property type="term" value="F:structural constituent of ribosome"/>
    <property type="evidence" value="ECO:0007669"/>
    <property type="project" value="InterPro"/>
</dbReference>
<dbReference type="GO" id="GO:0006412">
    <property type="term" value="P:translation"/>
    <property type="evidence" value="ECO:0007669"/>
    <property type="project" value="UniProtKB-UniRule"/>
</dbReference>
<dbReference type="FunFam" id="3.30.160.20:FF:000002">
    <property type="entry name" value="40S ribosomal protein S2"/>
    <property type="match status" value="1"/>
</dbReference>
<dbReference type="FunFam" id="3.30.230.10:FF:000004">
    <property type="entry name" value="40S ribosomal protein S2"/>
    <property type="match status" value="1"/>
</dbReference>
<dbReference type="Gene3D" id="3.30.160.20">
    <property type="match status" value="1"/>
</dbReference>
<dbReference type="Gene3D" id="3.30.230.10">
    <property type="match status" value="1"/>
</dbReference>
<dbReference type="HAMAP" id="MF_01307_A">
    <property type="entry name" value="Ribosomal_uS5_A"/>
    <property type="match status" value="1"/>
</dbReference>
<dbReference type="InterPro" id="IPR020568">
    <property type="entry name" value="Ribosomal_Su5_D2-typ_SF"/>
</dbReference>
<dbReference type="InterPro" id="IPR000851">
    <property type="entry name" value="Ribosomal_uS5"/>
</dbReference>
<dbReference type="InterPro" id="IPR047866">
    <property type="entry name" value="Ribosomal_uS5_arc"/>
</dbReference>
<dbReference type="InterPro" id="IPR005324">
    <property type="entry name" value="Ribosomal_uS5_C"/>
</dbReference>
<dbReference type="InterPro" id="IPR005711">
    <property type="entry name" value="Ribosomal_uS5_euk/arc"/>
</dbReference>
<dbReference type="InterPro" id="IPR013810">
    <property type="entry name" value="Ribosomal_uS5_N"/>
</dbReference>
<dbReference type="InterPro" id="IPR018192">
    <property type="entry name" value="Ribosomal_uS5_N_CS"/>
</dbReference>
<dbReference type="InterPro" id="IPR014721">
    <property type="entry name" value="Ribsml_uS5_D2-typ_fold_subgr"/>
</dbReference>
<dbReference type="NCBIfam" id="NF003125">
    <property type="entry name" value="PRK04044.1"/>
    <property type="match status" value="1"/>
</dbReference>
<dbReference type="NCBIfam" id="TIGR01020">
    <property type="entry name" value="uS5_euk_arch"/>
    <property type="match status" value="1"/>
</dbReference>
<dbReference type="PANTHER" id="PTHR13718:SF4">
    <property type="entry name" value="40S RIBOSOMAL PROTEIN S2"/>
    <property type="match status" value="1"/>
</dbReference>
<dbReference type="PANTHER" id="PTHR13718">
    <property type="entry name" value="RIBOSOMAL S SUBUNIT"/>
    <property type="match status" value="1"/>
</dbReference>
<dbReference type="Pfam" id="PF00333">
    <property type="entry name" value="Ribosomal_S5"/>
    <property type="match status" value="1"/>
</dbReference>
<dbReference type="Pfam" id="PF03719">
    <property type="entry name" value="Ribosomal_S5_C"/>
    <property type="match status" value="1"/>
</dbReference>
<dbReference type="SUPFAM" id="SSF54768">
    <property type="entry name" value="dsRNA-binding domain-like"/>
    <property type="match status" value="1"/>
</dbReference>
<dbReference type="SUPFAM" id="SSF54211">
    <property type="entry name" value="Ribosomal protein S5 domain 2-like"/>
    <property type="match status" value="1"/>
</dbReference>
<dbReference type="PROSITE" id="PS00585">
    <property type="entry name" value="RIBOSOMAL_S5"/>
    <property type="match status" value="1"/>
</dbReference>
<dbReference type="PROSITE" id="PS50881">
    <property type="entry name" value="S5_DSRBD"/>
    <property type="match status" value="1"/>
</dbReference>
<feature type="chain" id="PRO_0000323233" description="Small ribosomal subunit protein uS5">
    <location>
        <begin position="1"/>
        <end position="229"/>
    </location>
</feature>
<feature type="domain" description="S5 DRBM" evidence="1">
    <location>
        <begin position="61"/>
        <end position="124"/>
    </location>
</feature>
<organism>
    <name type="scientific">Methanococcus maripaludis (strain C7 / ATCC BAA-1331)</name>
    <dbReference type="NCBI Taxonomy" id="426368"/>
    <lineage>
        <taxon>Archaea</taxon>
        <taxon>Methanobacteriati</taxon>
        <taxon>Methanobacteriota</taxon>
        <taxon>Methanomada group</taxon>
        <taxon>Methanococci</taxon>
        <taxon>Methanococcales</taxon>
        <taxon>Methanococcaceae</taxon>
        <taxon>Methanococcus</taxon>
    </lineage>
</organism>
<accession>A6VH05</accession>
<name>RS5_METM7</name>
<comment type="function">
    <text evidence="1">With S4 and S12 plays an important role in translational accuracy.</text>
</comment>
<comment type="subunit">
    <text evidence="1">Part of the 30S ribosomal subunit. Contacts protein S4.</text>
</comment>
<comment type="domain">
    <text>The N-terminal domain interacts with the head of the 30S subunit; the C-terminal domain interacts with the body and contacts protein S4. The interaction surface between S4 and S5 is involved in control of translational fidelity.</text>
</comment>
<comment type="similarity">
    <text evidence="1">Belongs to the universal ribosomal protein uS5 family.</text>
</comment>
<keyword id="KW-0687">Ribonucleoprotein</keyword>
<keyword id="KW-0689">Ribosomal protein</keyword>
<keyword id="KW-0694">RNA-binding</keyword>
<keyword id="KW-0699">rRNA-binding</keyword>
<sequence>MAEKKAEKRAEKRKFNTEAWEPKTQIGRMVKEGTISDINYIMDKGLPLLEPEIVDALLPDLEEQVLDVKLVQRMHKSGRRARYRATVVVGNKNGYVGVGMGKSKEVGPAIRKAIAHAKLSLIKVRIGCGSWECGCGYPHSIPFTAKGACGSVKVELLPAPRGVGLVAGNVAKAVLGLAGIKDAWTKTFGDTRTTYNFAEATFDALNNLNFVRCLPAQKEKLGLTEGRVL</sequence>
<gene>
    <name evidence="1" type="primary">rps5</name>
    <name type="ordered locus">MmarC7_0664</name>
</gene>
<proteinExistence type="inferred from homology"/>
<protein>
    <recommendedName>
        <fullName evidence="1">Small ribosomal subunit protein uS5</fullName>
    </recommendedName>
    <alternativeName>
        <fullName evidence="2">30S ribosomal protein S5</fullName>
    </alternativeName>
</protein>